<dbReference type="EMBL" id="BA000039">
    <property type="protein sequence ID" value="BAC07982.1"/>
    <property type="molecule type" value="Genomic_DNA"/>
</dbReference>
<dbReference type="RefSeq" id="NP_681220.1">
    <property type="nucleotide sequence ID" value="NC_004113.1"/>
</dbReference>
<dbReference type="RefSeq" id="WP_011056285.1">
    <property type="nucleotide sequence ID" value="NC_004113.1"/>
</dbReference>
<dbReference type="SMR" id="Q8DLP8"/>
<dbReference type="STRING" id="197221.gene:10747019"/>
<dbReference type="EnsemblBacteria" id="BAC07982">
    <property type="protein sequence ID" value="BAC07982"/>
    <property type="gene ID" value="BAC07982"/>
</dbReference>
<dbReference type="KEGG" id="tel:tlr0430"/>
<dbReference type="PATRIC" id="fig|197221.4.peg.454"/>
<dbReference type="eggNOG" id="COG0356">
    <property type="taxonomic scope" value="Bacteria"/>
</dbReference>
<dbReference type="Proteomes" id="UP000000440">
    <property type="component" value="Chromosome"/>
</dbReference>
<dbReference type="GO" id="GO:0031676">
    <property type="term" value="C:plasma membrane-derived thylakoid membrane"/>
    <property type="evidence" value="ECO:0007669"/>
    <property type="project" value="UniProtKB-SubCell"/>
</dbReference>
<dbReference type="GO" id="GO:0045259">
    <property type="term" value="C:proton-transporting ATP synthase complex"/>
    <property type="evidence" value="ECO:0007669"/>
    <property type="project" value="UniProtKB-KW"/>
</dbReference>
<dbReference type="GO" id="GO:0046933">
    <property type="term" value="F:proton-transporting ATP synthase activity, rotational mechanism"/>
    <property type="evidence" value="ECO:0007669"/>
    <property type="project" value="UniProtKB-UniRule"/>
</dbReference>
<dbReference type="CDD" id="cd00310">
    <property type="entry name" value="ATP-synt_Fo_a_6"/>
    <property type="match status" value="1"/>
</dbReference>
<dbReference type="FunFam" id="1.20.120.220:FF:000001">
    <property type="entry name" value="ATP synthase subunit a, chloroplastic"/>
    <property type="match status" value="1"/>
</dbReference>
<dbReference type="Gene3D" id="1.20.120.220">
    <property type="entry name" value="ATP synthase, F0 complex, subunit A"/>
    <property type="match status" value="1"/>
</dbReference>
<dbReference type="HAMAP" id="MF_01393">
    <property type="entry name" value="ATP_synth_a_bact"/>
    <property type="match status" value="1"/>
</dbReference>
<dbReference type="InterPro" id="IPR045082">
    <property type="entry name" value="ATP_syn_F0_a_bact/chloroplast"/>
</dbReference>
<dbReference type="InterPro" id="IPR000568">
    <property type="entry name" value="ATP_synth_F0_asu"/>
</dbReference>
<dbReference type="InterPro" id="IPR023011">
    <property type="entry name" value="ATP_synth_F0_asu_AS"/>
</dbReference>
<dbReference type="InterPro" id="IPR035908">
    <property type="entry name" value="F0_ATP_A_sf"/>
</dbReference>
<dbReference type="NCBIfam" id="TIGR01131">
    <property type="entry name" value="ATP_synt_6_or_A"/>
    <property type="match status" value="1"/>
</dbReference>
<dbReference type="PANTHER" id="PTHR42823">
    <property type="entry name" value="ATP SYNTHASE SUBUNIT A, CHLOROPLASTIC"/>
    <property type="match status" value="1"/>
</dbReference>
<dbReference type="PANTHER" id="PTHR42823:SF3">
    <property type="entry name" value="ATP SYNTHASE SUBUNIT A, CHLOROPLASTIC"/>
    <property type="match status" value="1"/>
</dbReference>
<dbReference type="Pfam" id="PF00119">
    <property type="entry name" value="ATP-synt_A"/>
    <property type="match status" value="1"/>
</dbReference>
<dbReference type="PRINTS" id="PR00123">
    <property type="entry name" value="ATPASEA"/>
</dbReference>
<dbReference type="SUPFAM" id="SSF81336">
    <property type="entry name" value="F1F0 ATP synthase subunit A"/>
    <property type="match status" value="1"/>
</dbReference>
<dbReference type="PROSITE" id="PS00449">
    <property type="entry name" value="ATPASE_A"/>
    <property type="match status" value="1"/>
</dbReference>
<accession>Q8DLP8</accession>
<protein>
    <recommendedName>
        <fullName evidence="1">ATP synthase subunit a</fullName>
    </recommendedName>
    <alternativeName>
        <fullName evidence="1">ATP synthase F0 sector subunit a</fullName>
    </alternativeName>
    <alternativeName>
        <fullName evidence="1">F-ATPase subunit 6</fullName>
    </alternativeName>
</protein>
<evidence type="ECO:0000255" key="1">
    <source>
        <dbReference type="HAMAP-Rule" id="MF_01393"/>
    </source>
</evidence>
<organism>
    <name type="scientific">Thermosynechococcus vestitus (strain NIES-2133 / IAM M-273 / BP-1)</name>
    <dbReference type="NCBI Taxonomy" id="197221"/>
    <lineage>
        <taxon>Bacteria</taxon>
        <taxon>Bacillati</taxon>
        <taxon>Cyanobacteriota</taxon>
        <taxon>Cyanophyceae</taxon>
        <taxon>Acaryochloridales</taxon>
        <taxon>Thermosynechococcaceae</taxon>
        <taxon>Thermosynechococcus</taxon>
    </lineage>
</organism>
<comment type="function">
    <text evidence="1">Key component of the proton channel; it plays a direct role in the translocation of protons across the membrane.</text>
</comment>
<comment type="subunit">
    <text evidence="1">F-type ATPases have 2 components, CF(1) - the catalytic core - and CF(0) - the membrane proton channel. CF(1) has five subunits: alpha(3), beta(3), gamma(1), delta(1), epsilon(1). CF(0) has four main subunits: a, b, b' and c.</text>
</comment>
<comment type="subcellular location">
    <subcellularLocation>
        <location evidence="1">Cellular thylakoid membrane</location>
        <topology evidence="1">Multi-pass membrane protein</topology>
    </subcellularLocation>
</comment>
<comment type="similarity">
    <text evidence="1">Belongs to the ATPase A chain family.</text>
</comment>
<reference key="1">
    <citation type="journal article" date="2002" name="DNA Res.">
        <title>Complete genome structure of the thermophilic cyanobacterium Thermosynechococcus elongatus BP-1.</title>
        <authorList>
            <person name="Nakamura Y."/>
            <person name="Kaneko T."/>
            <person name="Sato S."/>
            <person name="Ikeuchi M."/>
            <person name="Katoh H."/>
            <person name="Sasamoto S."/>
            <person name="Watanabe A."/>
            <person name="Iriguchi M."/>
            <person name="Kawashima K."/>
            <person name="Kimura T."/>
            <person name="Kishida Y."/>
            <person name="Kiyokawa C."/>
            <person name="Kohara M."/>
            <person name="Matsumoto M."/>
            <person name="Matsuno A."/>
            <person name="Nakazaki N."/>
            <person name="Shimpo S."/>
            <person name="Sugimoto M."/>
            <person name="Takeuchi C."/>
            <person name="Yamada M."/>
            <person name="Tabata S."/>
        </authorList>
    </citation>
    <scope>NUCLEOTIDE SEQUENCE [LARGE SCALE GENOMIC DNA]</scope>
    <source>
        <strain>NIES-2133 / IAM M-273 / BP-1</strain>
    </source>
</reference>
<keyword id="KW-0066">ATP synthesis</keyword>
<keyword id="KW-0138">CF(0)</keyword>
<keyword id="KW-0375">Hydrogen ion transport</keyword>
<keyword id="KW-0406">Ion transport</keyword>
<keyword id="KW-0472">Membrane</keyword>
<keyword id="KW-1185">Reference proteome</keyword>
<keyword id="KW-0793">Thylakoid</keyword>
<keyword id="KW-0812">Transmembrane</keyword>
<keyword id="KW-1133">Transmembrane helix</keyword>
<keyword id="KW-0813">Transport</keyword>
<gene>
    <name evidence="1" type="primary">atpB</name>
    <name evidence="1" type="synonym">atpI</name>
    <name type="ordered locus">tlr0430</name>
</gene>
<feature type="chain" id="PRO_0000362482" description="ATP synthase subunit a">
    <location>
        <begin position="1"/>
        <end position="252"/>
    </location>
</feature>
<feature type="transmembrane region" description="Helical" evidence="1">
    <location>
        <begin position="33"/>
        <end position="53"/>
    </location>
</feature>
<feature type="transmembrane region" description="Helical" evidence="1">
    <location>
        <begin position="92"/>
        <end position="112"/>
    </location>
</feature>
<feature type="transmembrane region" description="Helical" evidence="1">
    <location>
        <begin position="130"/>
        <end position="150"/>
    </location>
</feature>
<feature type="transmembrane region" description="Helical" evidence="1">
    <location>
        <begin position="196"/>
        <end position="216"/>
    </location>
</feature>
<feature type="transmembrane region" description="Helical" evidence="1">
    <location>
        <begin position="217"/>
        <end position="237"/>
    </location>
</feature>
<sequence>MMPLIDLWTALPLAKLEVGHHFYWYIGNLRVHGQVFITTWFVMALLIAVAFVASRNIQRVPSGIQNLMEYALEFIRDLTKSQMGEHEYRAWVPFVGTLFLFIFVCNWSGALVPWKLIELPEGELAAPTNDINTTVALALLVSLAYFYAGLRKRGLKYFTKYIEPTPVLLPIAILEDFTKPLSLSFRLFGNILADELVVSVLVLLVPLFVPLPVMVLGLFTSAIQALVFATLAATYIGEAMEGHGGDHEAAHS</sequence>
<proteinExistence type="inferred from homology"/>
<name>ATP6_THEVB</name>